<gene>
    <name evidence="1" type="primary">pstB2</name>
    <name type="ordered locus">PSPPH_5120</name>
</gene>
<sequence>MQHESPTHGMNMSALRRHKQRLDLADETVAIEVPGLNLFYGDKQALFDIALNIPKQKVTSFIGPSGCGKSTLLRSFNRMNDLVDGCRIEGAINLYGHNIYTKGEEVAELRRRVGMVFQKPNPFPKTIYENVVYGLRIQGINKKRVLDEAVEWALKAAALWDEVKDRLHESALGLSGGQQQRLVIARTIAVEPEVLLLDEPCSALDPISTLKVEELIYELKSKYTIVIVTHNMQQAARVSDYTAFMYMGKLVEFGDTDTLFTNPAKKQTEDYITGRYG</sequence>
<evidence type="ECO:0000255" key="1">
    <source>
        <dbReference type="HAMAP-Rule" id="MF_01702"/>
    </source>
</evidence>
<accession>Q48BP8</accession>
<dbReference type="EC" id="7.3.2.1" evidence="1"/>
<dbReference type="EMBL" id="CP000058">
    <property type="protein sequence ID" value="AAZ33522.1"/>
    <property type="molecule type" value="Genomic_DNA"/>
</dbReference>
<dbReference type="SMR" id="Q48BP8"/>
<dbReference type="KEGG" id="psp:PSPPH_5120"/>
<dbReference type="eggNOG" id="COG1117">
    <property type="taxonomic scope" value="Bacteria"/>
</dbReference>
<dbReference type="HOGENOM" id="CLU_000604_1_22_6"/>
<dbReference type="Proteomes" id="UP000000551">
    <property type="component" value="Chromosome"/>
</dbReference>
<dbReference type="GO" id="GO:0005886">
    <property type="term" value="C:plasma membrane"/>
    <property type="evidence" value="ECO:0007669"/>
    <property type="project" value="UniProtKB-SubCell"/>
</dbReference>
<dbReference type="GO" id="GO:0005524">
    <property type="term" value="F:ATP binding"/>
    <property type="evidence" value="ECO:0007669"/>
    <property type="project" value="UniProtKB-KW"/>
</dbReference>
<dbReference type="GO" id="GO:0016887">
    <property type="term" value="F:ATP hydrolysis activity"/>
    <property type="evidence" value="ECO:0007669"/>
    <property type="project" value="InterPro"/>
</dbReference>
<dbReference type="GO" id="GO:0015415">
    <property type="term" value="F:ATPase-coupled phosphate ion transmembrane transporter activity"/>
    <property type="evidence" value="ECO:0007669"/>
    <property type="project" value="UniProtKB-EC"/>
</dbReference>
<dbReference type="GO" id="GO:0035435">
    <property type="term" value="P:phosphate ion transmembrane transport"/>
    <property type="evidence" value="ECO:0007669"/>
    <property type="project" value="InterPro"/>
</dbReference>
<dbReference type="CDD" id="cd03260">
    <property type="entry name" value="ABC_PstB_phosphate_transporter"/>
    <property type="match status" value="1"/>
</dbReference>
<dbReference type="FunFam" id="3.40.50.300:FF:000132">
    <property type="entry name" value="Phosphate import ATP-binding protein PstB"/>
    <property type="match status" value="1"/>
</dbReference>
<dbReference type="Gene3D" id="3.40.50.300">
    <property type="entry name" value="P-loop containing nucleotide triphosphate hydrolases"/>
    <property type="match status" value="1"/>
</dbReference>
<dbReference type="InterPro" id="IPR003593">
    <property type="entry name" value="AAA+_ATPase"/>
</dbReference>
<dbReference type="InterPro" id="IPR003439">
    <property type="entry name" value="ABC_transporter-like_ATP-bd"/>
</dbReference>
<dbReference type="InterPro" id="IPR017871">
    <property type="entry name" value="ABC_transporter-like_CS"/>
</dbReference>
<dbReference type="InterPro" id="IPR027417">
    <property type="entry name" value="P-loop_NTPase"/>
</dbReference>
<dbReference type="InterPro" id="IPR005670">
    <property type="entry name" value="PstB-like"/>
</dbReference>
<dbReference type="NCBIfam" id="TIGR00972">
    <property type="entry name" value="3a0107s01c2"/>
    <property type="match status" value="1"/>
</dbReference>
<dbReference type="PANTHER" id="PTHR43423">
    <property type="entry name" value="ABC TRANSPORTER I FAMILY MEMBER 17"/>
    <property type="match status" value="1"/>
</dbReference>
<dbReference type="PANTHER" id="PTHR43423:SF12">
    <property type="entry name" value="IRON EXPORT ATP-BINDING PROTEIN FETA-RELATED"/>
    <property type="match status" value="1"/>
</dbReference>
<dbReference type="Pfam" id="PF00005">
    <property type="entry name" value="ABC_tran"/>
    <property type="match status" value="1"/>
</dbReference>
<dbReference type="SMART" id="SM00382">
    <property type="entry name" value="AAA"/>
    <property type="match status" value="1"/>
</dbReference>
<dbReference type="SUPFAM" id="SSF52540">
    <property type="entry name" value="P-loop containing nucleoside triphosphate hydrolases"/>
    <property type="match status" value="1"/>
</dbReference>
<dbReference type="PROSITE" id="PS00211">
    <property type="entry name" value="ABC_TRANSPORTER_1"/>
    <property type="match status" value="1"/>
</dbReference>
<dbReference type="PROSITE" id="PS50893">
    <property type="entry name" value="ABC_TRANSPORTER_2"/>
    <property type="match status" value="1"/>
</dbReference>
<dbReference type="PROSITE" id="PS51238">
    <property type="entry name" value="PSTB"/>
    <property type="match status" value="1"/>
</dbReference>
<keyword id="KW-0067">ATP-binding</keyword>
<keyword id="KW-0997">Cell inner membrane</keyword>
<keyword id="KW-1003">Cell membrane</keyword>
<keyword id="KW-0472">Membrane</keyword>
<keyword id="KW-0547">Nucleotide-binding</keyword>
<keyword id="KW-0592">Phosphate transport</keyword>
<keyword id="KW-1278">Translocase</keyword>
<keyword id="KW-0813">Transport</keyword>
<feature type="chain" id="PRO_0000272500" description="Phosphate import ATP-binding protein PstB 2">
    <location>
        <begin position="1"/>
        <end position="277"/>
    </location>
</feature>
<feature type="domain" description="ABC transporter" evidence="1">
    <location>
        <begin position="31"/>
        <end position="272"/>
    </location>
</feature>
<feature type="binding site" evidence="1">
    <location>
        <begin position="63"/>
        <end position="70"/>
    </location>
    <ligand>
        <name>ATP</name>
        <dbReference type="ChEBI" id="CHEBI:30616"/>
    </ligand>
</feature>
<name>PSTB2_PSE14</name>
<reference key="1">
    <citation type="journal article" date="2005" name="J. Bacteriol.">
        <title>Whole-genome sequence analysis of Pseudomonas syringae pv. phaseolicola 1448A reveals divergence among pathovars in genes involved in virulence and transposition.</title>
        <authorList>
            <person name="Joardar V."/>
            <person name="Lindeberg M."/>
            <person name="Jackson R.W."/>
            <person name="Selengut J."/>
            <person name="Dodson R."/>
            <person name="Brinkac L.M."/>
            <person name="Daugherty S.C."/>
            <person name="DeBoy R.T."/>
            <person name="Durkin A.S."/>
            <person name="Gwinn Giglio M."/>
            <person name="Madupu R."/>
            <person name="Nelson W.C."/>
            <person name="Rosovitz M.J."/>
            <person name="Sullivan S.A."/>
            <person name="Crabtree J."/>
            <person name="Creasy T."/>
            <person name="Davidsen T.M."/>
            <person name="Haft D.H."/>
            <person name="Zafar N."/>
            <person name="Zhou L."/>
            <person name="Halpin R."/>
            <person name="Holley T."/>
            <person name="Khouri H.M."/>
            <person name="Feldblyum T.V."/>
            <person name="White O."/>
            <person name="Fraser C.M."/>
            <person name="Chatterjee A.K."/>
            <person name="Cartinhour S."/>
            <person name="Schneider D."/>
            <person name="Mansfield J.W."/>
            <person name="Collmer A."/>
            <person name="Buell R."/>
        </authorList>
    </citation>
    <scope>NUCLEOTIDE SEQUENCE [LARGE SCALE GENOMIC DNA]</scope>
    <source>
        <strain>1448A / Race 6</strain>
    </source>
</reference>
<organism>
    <name type="scientific">Pseudomonas savastanoi pv. phaseolicola (strain 1448A / Race 6)</name>
    <name type="common">Pseudomonas syringae pv. phaseolicola (strain 1448A / Race 6)</name>
    <dbReference type="NCBI Taxonomy" id="264730"/>
    <lineage>
        <taxon>Bacteria</taxon>
        <taxon>Pseudomonadati</taxon>
        <taxon>Pseudomonadota</taxon>
        <taxon>Gammaproteobacteria</taxon>
        <taxon>Pseudomonadales</taxon>
        <taxon>Pseudomonadaceae</taxon>
        <taxon>Pseudomonas</taxon>
    </lineage>
</organism>
<protein>
    <recommendedName>
        <fullName evidence="1">Phosphate import ATP-binding protein PstB 2</fullName>
        <ecNumber evidence="1">7.3.2.1</ecNumber>
    </recommendedName>
    <alternativeName>
        <fullName evidence="1">ABC phosphate transporter 2</fullName>
    </alternativeName>
    <alternativeName>
        <fullName evidence="1">Phosphate-transporting ATPase 2</fullName>
    </alternativeName>
</protein>
<comment type="function">
    <text evidence="1">Part of the ABC transporter complex PstSACB involved in phosphate import. Responsible for energy coupling to the transport system.</text>
</comment>
<comment type="catalytic activity">
    <reaction evidence="1">
        <text>phosphate(out) + ATP + H2O = ADP + 2 phosphate(in) + H(+)</text>
        <dbReference type="Rhea" id="RHEA:24440"/>
        <dbReference type="ChEBI" id="CHEBI:15377"/>
        <dbReference type="ChEBI" id="CHEBI:15378"/>
        <dbReference type="ChEBI" id="CHEBI:30616"/>
        <dbReference type="ChEBI" id="CHEBI:43474"/>
        <dbReference type="ChEBI" id="CHEBI:456216"/>
        <dbReference type="EC" id="7.3.2.1"/>
    </reaction>
</comment>
<comment type="subunit">
    <text evidence="1">The complex is composed of two ATP-binding proteins (PstB), two transmembrane proteins (PstC and PstA) and a solute-binding protein (PstS).</text>
</comment>
<comment type="subcellular location">
    <subcellularLocation>
        <location evidence="1">Cell inner membrane</location>
        <topology evidence="1">Peripheral membrane protein</topology>
    </subcellularLocation>
</comment>
<comment type="similarity">
    <text evidence="1">Belongs to the ABC transporter superfamily. Phosphate importer (TC 3.A.1.7) family.</text>
</comment>
<proteinExistence type="inferred from homology"/>